<name>HBB_MUSPF</name>
<dbReference type="PIR" id="S11534">
    <property type="entry name" value="HBMN"/>
</dbReference>
<dbReference type="SMR" id="P68044"/>
<dbReference type="FunCoup" id="P68044">
    <property type="interactions" value="3"/>
</dbReference>
<dbReference type="STRING" id="9669.ENSMPUP00000010075"/>
<dbReference type="eggNOG" id="KOG3378">
    <property type="taxonomic scope" value="Eukaryota"/>
</dbReference>
<dbReference type="HOGENOM" id="CLU_003827_10_0_1"/>
<dbReference type="InParanoid" id="P68044"/>
<dbReference type="OMA" id="HAIVSIW"/>
<dbReference type="Proteomes" id="UP000000715">
    <property type="component" value="Unplaced"/>
</dbReference>
<dbReference type="GO" id="GO:0072562">
    <property type="term" value="C:blood microparticle"/>
    <property type="evidence" value="ECO:0007669"/>
    <property type="project" value="TreeGrafter"/>
</dbReference>
<dbReference type="GO" id="GO:0031838">
    <property type="term" value="C:haptoglobin-hemoglobin complex"/>
    <property type="evidence" value="ECO:0007669"/>
    <property type="project" value="TreeGrafter"/>
</dbReference>
<dbReference type="GO" id="GO:0005833">
    <property type="term" value="C:hemoglobin complex"/>
    <property type="evidence" value="ECO:0007669"/>
    <property type="project" value="InterPro"/>
</dbReference>
<dbReference type="GO" id="GO:0031720">
    <property type="term" value="F:haptoglobin binding"/>
    <property type="evidence" value="ECO:0007669"/>
    <property type="project" value="TreeGrafter"/>
</dbReference>
<dbReference type="GO" id="GO:0020037">
    <property type="term" value="F:heme binding"/>
    <property type="evidence" value="ECO:0007669"/>
    <property type="project" value="InterPro"/>
</dbReference>
<dbReference type="GO" id="GO:0031721">
    <property type="term" value="F:hemoglobin alpha binding"/>
    <property type="evidence" value="ECO:0007669"/>
    <property type="project" value="TreeGrafter"/>
</dbReference>
<dbReference type="GO" id="GO:0046872">
    <property type="term" value="F:metal ion binding"/>
    <property type="evidence" value="ECO:0007669"/>
    <property type="project" value="UniProtKB-KW"/>
</dbReference>
<dbReference type="GO" id="GO:0043177">
    <property type="term" value="F:organic acid binding"/>
    <property type="evidence" value="ECO:0007669"/>
    <property type="project" value="TreeGrafter"/>
</dbReference>
<dbReference type="GO" id="GO:0019825">
    <property type="term" value="F:oxygen binding"/>
    <property type="evidence" value="ECO:0007669"/>
    <property type="project" value="InterPro"/>
</dbReference>
<dbReference type="GO" id="GO:0005344">
    <property type="term" value="F:oxygen carrier activity"/>
    <property type="evidence" value="ECO:0007669"/>
    <property type="project" value="UniProtKB-KW"/>
</dbReference>
<dbReference type="GO" id="GO:0004601">
    <property type="term" value="F:peroxidase activity"/>
    <property type="evidence" value="ECO:0007669"/>
    <property type="project" value="TreeGrafter"/>
</dbReference>
<dbReference type="GO" id="GO:0042744">
    <property type="term" value="P:hydrogen peroxide catabolic process"/>
    <property type="evidence" value="ECO:0007669"/>
    <property type="project" value="TreeGrafter"/>
</dbReference>
<dbReference type="CDD" id="cd08925">
    <property type="entry name" value="Hb-beta-like"/>
    <property type="match status" value="1"/>
</dbReference>
<dbReference type="FunFam" id="1.10.490.10:FF:000001">
    <property type="entry name" value="Hemoglobin subunit beta"/>
    <property type="match status" value="1"/>
</dbReference>
<dbReference type="Gene3D" id="1.10.490.10">
    <property type="entry name" value="Globins"/>
    <property type="match status" value="1"/>
</dbReference>
<dbReference type="InterPro" id="IPR000971">
    <property type="entry name" value="Globin"/>
</dbReference>
<dbReference type="InterPro" id="IPR009050">
    <property type="entry name" value="Globin-like_sf"/>
</dbReference>
<dbReference type="InterPro" id="IPR012292">
    <property type="entry name" value="Globin/Proto"/>
</dbReference>
<dbReference type="InterPro" id="IPR002337">
    <property type="entry name" value="Hemoglobin_b"/>
</dbReference>
<dbReference type="InterPro" id="IPR050056">
    <property type="entry name" value="Hemoglobin_oxygen_transport"/>
</dbReference>
<dbReference type="PANTHER" id="PTHR11442">
    <property type="entry name" value="HEMOGLOBIN FAMILY MEMBER"/>
    <property type="match status" value="1"/>
</dbReference>
<dbReference type="PANTHER" id="PTHR11442:SF42">
    <property type="entry name" value="HEMOGLOBIN SUBUNIT BETA"/>
    <property type="match status" value="1"/>
</dbReference>
<dbReference type="Pfam" id="PF00042">
    <property type="entry name" value="Globin"/>
    <property type="match status" value="1"/>
</dbReference>
<dbReference type="PRINTS" id="PR00814">
    <property type="entry name" value="BETAHAEM"/>
</dbReference>
<dbReference type="SUPFAM" id="SSF46458">
    <property type="entry name" value="Globin-like"/>
    <property type="match status" value="1"/>
</dbReference>
<dbReference type="PROSITE" id="PS01033">
    <property type="entry name" value="GLOBIN"/>
    <property type="match status" value="1"/>
</dbReference>
<proteinExistence type="evidence at protein level"/>
<feature type="chain" id="PRO_0000053030" description="Hemoglobin subunit beta">
    <location>
        <begin position="1"/>
        <end position="146"/>
    </location>
</feature>
<feature type="domain" description="Globin" evidence="3">
    <location>
        <begin position="2"/>
        <end position="146"/>
    </location>
</feature>
<feature type="binding site" description="distal binding residue">
    <location>
        <position position="63"/>
    </location>
    <ligand>
        <name>heme b</name>
        <dbReference type="ChEBI" id="CHEBI:60344"/>
    </ligand>
    <ligandPart>
        <name>Fe</name>
        <dbReference type="ChEBI" id="CHEBI:18248"/>
    </ligandPart>
</feature>
<feature type="binding site" description="proximal binding residue">
    <location>
        <position position="92"/>
    </location>
    <ligand>
        <name>heme b</name>
        <dbReference type="ChEBI" id="CHEBI:60344"/>
    </ligand>
    <ligandPart>
        <name>Fe</name>
        <dbReference type="ChEBI" id="CHEBI:18248"/>
    </ligandPart>
</feature>
<feature type="modified residue" description="N-acetylvaline" evidence="1">
    <location>
        <position position="1"/>
    </location>
</feature>
<feature type="modified residue" description="Phosphothreonine" evidence="2">
    <location>
        <position position="12"/>
    </location>
</feature>
<feature type="modified residue" description="Phosphoserine" evidence="2">
    <location>
        <position position="44"/>
    </location>
</feature>
<feature type="modified residue" description="N6-acetyllysine" evidence="2">
    <location>
        <position position="59"/>
    </location>
</feature>
<feature type="modified residue" description="N6-acetyllysine" evidence="2">
    <location>
        <position position="82"/>
    </location>
</feature>
<feature type="modified residue" description="S-nitrosocysteine" evidence="2">
    <location>
        <position position="93"/>
    </location>
</feature>
<feature type="modified residue" description="N6-acetyllysine" evidence="2">
    <location>
        <position position="144"/>
    </location>
</feature>
<sequence>VHLTGEEKAAVTALWGKVNVDEVGGETLGRLLVVYPWTQRFFDSFGDLSSPDAVMSNPKVKAHGKKVLNSFSEGLKNLDNLKGTFAKLSELHCDKLHVDPENFKLLGNVLVCVLAHHFGKEFTPQVQAAYQKVVAGVANALAHKYH</sequence>
<protein>
    <recommendedName>
        <fullName>Hemoglobin subunit beta</fullName>
    </recommendedName>
    <alternativeName>
        <fullName>Beta-globin</fullName>
    </alternativeName>
    <alternativeName>
        <fullName>Hemoglobin beta chain</fullName>
    </alternativeName>
</protein>
<comment type="function">
    <text>Involved in oxygen transport from the lung to the various peripheral tissues.</text>
</comment>
<comment type="subunit">
    <text>Heterotetramer of two alpha chains and two beta chains.</text>
</comment>
<comment type="tissue specificity">
    <text>Red blood cells.</text>
</comment>
<comment type="similarity">
    <text evidence="3">Belongs to the globin family.</text>
</comment>
<accession>P68044</accession>
<accession>P19017</accession>
<organism>
    <name type="scientific">Mustela putorius furo</name>
    <name type="common">European domestic ferret</name>
    <name type="synonym">Mustela furo</name>
    <dbReference type="NCBI Taxonomy" id="9669"/>
    <lineage>
        <taxon>Eukaryota</taxon>
        <taxon>Metazoa</taxon>
        <taxon>Chordata</taxon>
        <taxon>Craniata</taxon>
        <taxon>Vertebrata</taxon>
        <taxon>Euteleostomi</taxon>
        <taxon>Mammalia</taxon>
        <taxon>Eutheria</taxon>
        <taxon>Laurasiatheria</taxon>
        <taxon>Carnivora</taxon>
        <taxon>Caniformia</taxon>
        <taxon>Musteloidea</taxon>
        <taxon>Mustelidae</taxon>
        <taxon>Mustelinae</taxon>
        <taxon>Mustela</taxon>
    </lineage>
</organism>
<keyword id="KW-0007">Acetylation</keyword>
<keyword id="KW-0903">Direct protein sequencing</keyword>
<keyword id="KW-0349">Heme</keyword>
<keyword id="KW-0408">Iron</keyword>
<keyword id="KW-0479">Metal-binding</keyword>
<keyword id="KW-0561">Oxygen transport</keyword>
<keyword id="KW-0597">Phosphoprotein</keyword>
<keyword id="KW-1185">Reference proteome</keyword>
<keyword id="KW-0702">S-nitrosylation</keyword>
<keyword id="KW-0813">Transport</keyword>
<gene>
    <name type="primary">HBB</name>
</gene>
<reference key="1">
    <citation type="journal article" date="1988" name="Biochem. Soc. Trans.">
        <title>The primary structure of the beta-chain of the haemoglobins of the ferret (Mustela putorius furo).</title>
        <authorList>
            <person name="Pauplin Y."/>
            <person name="Hombrados I."/>
            <person name="Faure F."/>
            <person name="Han K.K."/>
            <person name="Neuzil E."/>
        </authorList>
    </citation>
    <scope>PROTEIN SEQUENCE</scope>
</reference>
<reference key="2">
    <citation type="journal article" date="1989" name="Biol. Chem. Hoppe-Seyler">
        <title>Carnivora: the primary structure of the alpha-chains of ferret (Mustela putorius furo, Mustelidae) hemoglobins.</title>
        <authorList>
            <person name="Hombrados I."/>
            <person name="Vidal Y."/>
            <person name="Rodewald K."/>
            <person name="Braunitzer G."/>
            <person name="Neuzil E."/>
        </authorList>
    </citation>
    <scope>PROTEIN SEQUENCE</scope>
</reference>
<evidence type="ECO:0000250" key="1">
    <source>
        <dbReference type="UniProtKB" id="P02086"/>
    </source>
</evidence>
<evidence type="ECO:0000250" key="2">
    <source>
        <dbReference type="UniProtKB" id="P68871"/>
    </source>
</evidence>
<evidence type="ECO:0000255" key="3">
    <source>
        <dbReference type="PROSITE-ProRule" id="PRU00238"/>
    </source>
</evidence>